<accession>Q56VL3</accession>
<accession>B4DPE7</accession>
<accession>Q8N544</accession>
<keyword id="KW-0007">Acetylation</keyword>
<keyword id="KW-0025">Alternative splicing</keyword>
<keyword id="KW-0967">Endosome</keyword>
<keyword id="KW-0472">Membrane</keyword>
<keyword id="KW-0496">Mitochondrion</keyword>
<keyword id="KW-0999">Mitochondrion inner membrane</keyword>
<keyword id="KW-1267">Proteomics identification</keyword>
<keyword id="KW-1185">Reference proteome</keyword>
<feature type="chain" id="PRO_0000299392" description="OCIA domain-containing protein 2">
    <location>
        <begin position="1"/>
        <end position="154"/>
    </location>
</feature>
<feature type="domain" description="OCIA">
    <location>
        <begin position="1"/>
        <end position="120"/>
    </location>
</feature>
<feature type="region of interest" description="Disordered" evidence="1">
    <location>
        <begin position="1"/>
        <end position="22"/>
    </location>
</feature>
<feature type="modified residue" description="N6-acetyllysine" evidence="6">
    <location>
        <position position="41"/>
    </location>
</feature>
<feature type="splice variant" id="VSP_027626" description="In isoform 2." evidence="4 5">
    <original>LAGLLGFGLGKVSYIGVCQSKFHFFEDQLRGAGFGPQHNRHCLLTCEECKIKHGLSEKGDSQPSAS</original>
    <variation>RTASLPVRNAK</variation>
    <location>
        <begin position="89"/>
        <end position="154"/>
    </location>
</feature>
<feature type="sequence variant" id="VAR_053950" description="In dbSNP:rs7676916.">
    <original>R</original>
    <variation>Q</variation>
    <location>
        <position position="44"/>
    </location>
</feature>
<sequence length="154" mass="16954">MASASARGNQDKDAHFPPPSKQSLLFCPKSKLHIHRAEISKIMRECQEESFWKRALPFSLVSMLVTQGLVYQGYLAANSRFGSLPKVALAGLLGFGLGKVSYIGVCQSKFHFFEDQLRGAGFGPQHNRHCLLTCEECKIKHGLSEKGDSQPSAS</sequence>
<name>OCAD2_HUMAN</name>
<reference key="1">
    <citation type="submission" date="2003-11" db="EMBL/GenBank/DDBJ databases">
        <authorList>
            <person name="Zhang J."/>
            <person name="Wu M."/>
            <person name="Mao Y."/>
            <person name="Xie Y."/>
        </authorList>
    </citation>
    <scope>NUCLEOTIDE SEQUENCE [LARGE SCALE MRNA] (ISOFORM 1)</scope>
</reference>
<reference key="2">
    <citation type="journal article" date="2004" name="Nat. Genet.">
        <title>Complete sequencing and characterization of 21,243 full-length human cDNAs.</title>
        <authorList>
            <person name="Ota T."/>
            <person name="Suzuki Y."/>
            <person name="Nishikawa T."/>
            <person name="Otsuki T."/>
            <person name="Sugiyama T."/>
            <person name="Irie R."/>
            <person name="Wakamatsu A."/>
            <person name="Hayashi K."/>
            <person name="Sato H."/>
            <person name="Nagai K."/>
            <person name="Kimura K."/>
            <person name="Makita H."/>
            <person name="Sekine M."/>
            <person name="Obayashi M."/>
            <person name="Nishi T."/>
            <person name="Shibahara T."/>
            <person name="Tanaka T."/>
            <person name="Ishii S."/>
            <person name="Yamamoto J."/>
            <person name="Saito K."/>
            <person name="Kawai Y."/>
            <person name="Isono Y."/>
            <person name="Nakamura Y."/>
            <person name="Nagahari K."/>
            <person name="Murakami K."/>
            <person name="Yasuda T."/>
            <person name="Iwayanagi T."/>
            <person name="Wagatsuma M."/>
            <person name="Shiratori A."/>
            <person name="Sudo H."/>
            <person name="Hosoiri T."/>
            <person name="Kaku Y."/>
            <person name="Kodaira H."/>
            <person name="Kondo H."/>
            <person name="Sugawara M."/>
            <person name="Takahashi M."/>
            <person name="Kanda K."/>
            <person name="Yokoi T."/>
            <person name="Furuya T."/>
            <person name="Kikkawa E."/>
            <person name="Omura Y."/>
            <person name="Abe K."/>
            <person name="Kamihara K."/>
            <person name="Katsuta N."/>
            <person name="Sato K."/>
            <person name="Tanikawa M."/>
            <person name="Yamazaki M."/>
            <person name="Ninomiya K."/>
            <person name="Ishibashi T."/>
            <person name="Yamashita H."/>
            <person name="Murakawa K."/>
            <person name="Fujimori K."/>
            <person name="Tanai H."/>
            <person name="Kimata M."/>
            <person name="Watanabe M."/>
            <person name="Hiraoka S."/>
            <person name="Chiba Y."/>
            <person name="Ishida S."/>
            <person name="Ono Y."/>
            <person name="Takiguchi S."/>
            <person name="Watanabe S."/>
            <person name="Yosida M."/>
            <person name="Hotuta T."/>
            <person name="Kusano J."/>
            <person name="Kanehori K."/>
            <person name="Takahashi-Fujii A."/>
            <person name="Hara H."/>
            <person name="Tanase T.-O."/>
            <person name="Nomura Y."/>
            <person name="Togiya S."/>
            <person name="Komai F."/>
            <person name="Hara R."/>
            <person name="Takeuchi K."/>
            <person name="Arita M."/>
            <person name="Imose N."/>
            <person name="Musashino K."/>
            <person name="Yuuki H."/>
            <person name="Oshima A."/>
            <person name="Sasaki N."/>
            <person name="Aotsuka S."/>
            <person name="Yoshikawa Y."/>
            <person name="Matsunawa H."/>
            <person name="Ichihara T."/>
            <person name="Shiohata N."/>
            <person name="Sano S."/>
            <person name="Moriya S."/>
            <person name="Momiyama H."/>
            <person name="Satoh N."/>
            <person name="Takami S."/>
            <person name="Terashima Y."/>
            <person name="Suzuki O."/>
            <person name="Nakagawa S."/>
            <person name="Senoh A."/>
            <person name="Mizoguchi H."/>
            <person name="Goto Y."/>
            <person name="Shimizu F."/>
            <person name="Wakebe H."/>
            <person name="Hishigaki H."/>
            <person name="Watanabe T."/>
            <person name="Sugiyama A."/>
            <person name="Takemoto M."/>
            <person name="Kawakami B."/>
            <person name="Yamazaki M."/>
            <person name="Watanabe K."/>
            <person name="Kumagai A."/>
            <person name="Itakura S."/>
            <person name="Fukuzumi Y."/>
            <person name="Fujimori Y."/>
            <person name="Komiyama M."/>
            <person name="Tashiro H."/>
            <person name="Tanigami A."/>
            <person name="Fujiwara T."/>
            <person name="Ono T."/>
            <person name="Yamada K."/>
            <person name="Fujii Y."/>
            <person name="Ozaki K."/>
            <person name="Hirao M."/>
            <person name="Ohmori Y."/>
            <person name="Kawabata A."/>
            <person name="Hikiji T."/>
            <person name="Kobatake N."/>
            <person name="Inagaki H."/>
            <person name="Ikema Y."/>
            <person name="Okamoto S."/>
            <person name="Okitani R."/>
            <person name="Kawakami T."/>
            <person name="Noguchi S."/>
            <person name="Itoh T."/>
            <person name="Shigeta K."/>
            <person name="Senba T."/>
            <person name="Matsumura K."/>
            <person name="Nakajima Y."/>
            <person name="Mizuno T."/>
            <person name="Morinaga M."/>
            <person name="Sasaki M."/>
            <person name="Togashi T."/>
            <person name="Oyama M."/>
            <person name="Hata H."/>
            <person name="Watanabe M."/>
            <person name="Komatsu T."/>
            <person name="Mizushima-Sugano J."/>
            <person name="Satoh T."/>
            <person name="Shirai Y."/>
            <person name="Takahashi Y."/>
            <person name="Nakagawa K."/>
            <person name="Okumura K."/>
            <person name="Nagase T."/>
            <person name="Nomura N."/>
            <person name="Kikuchi H."/>
            <person name="Masuho Y."/>
            <person name="Yamashita R."/>
            <person name="Nakai K."/>
            <person name="Yada T."/>
            <person name="Nakamura Y."/>
            <person name="Ohara O."/>
            <person name="Isogai T."/>
            <person name="Sugano S."/>
        </authorList>
    </citation>
    <scope>NUCLEOTIDE SEQUENCE [LARGE SCALE MRNA] (ISOFORM 1)</scope>
    <source>
        <tissue>Kidney</tissue>
    </source>
</reference>
<reference key="3">
    <citation type="journal article" date="2007" name="BMC Genomics">
        <title>The full-ORF clone resource of the German cDNA consortium.</title>
        <authorList>
            <person name="Bechtel S."/>
            <person name="Rosenfelder H."/>
            <person name="Duda A."/>
            <person name="Schmidt C.P."/>
            <person name="Ernst U."/>
            <person name="Wellenreuther R."/>
            <person name="Mehrle A."/>
            <person name="Schuster C."/>
            <person name="Bahr A."/>
            <person name="Bloecker H."/>
            <person name="Heubner D."/>
            <person name="Hoerlein A."/>
            <person name="Michel G."/>
            <person name="Wedler H."/>
            <person name="Koehrer K."/>
            <person name="Ottenwaelder B."/>
            <person name="Poustka A."/>
            <person name="Wiemann S."/>
            <person name="Schupp I."/>
        </authorList>
    </citation>
    <scope>NUCLEOTIDE SEQUENCE [LARGE SCALE MRNA] (ISOFORM 2)</scope>
    <source>
        <tissue>Uterine endothelium</tissue>
    </source>
</reference>
<reference key="4">
    <citation type="submission" date="2005-07" db="EMBL/GenBank/DDBJ databases">
        <authorList>
            <person name="Mural R.J."/>
            <person name="Istrail S."/>
            <person name="Sutton G.G."/>
            <person name="Florea L."/>
            <person name="Halpern A.L."/>
            <person name="Mobarry C.M."/>
            <person name="Lippert R."/>
            <person name="Walenz B."/>
            <person name="Shatkay H."/>
            <person name="Dew I."/>
            <person name="Miller J.R."/>
            <person name="Flanigan M.J."/>
            <person name="Edwards N.J."/>
            <person name="Bolanos R."/>
            <person name="Fasulo D."/>
            <person name="Halldorsson B.V."/>
            <person name="Hannenhalli S."/>
            <person name="Turner R."/>
            <person name="Yooseph S."/>
            <person name="Lu F."/>
            <person name="Nusskern D.R."/>
            <person name="Shue B.C."/>
            <person name="Zheng X.H."/>
            <person name="Zhong F."/>
            <person name="Delcher A.L."/>
            <person name="Huson D.H."/>
            <person name="Kravitz S.A."/>
            <person name="Mouchard L."/>
            <person name="Reinert K."/>
            <person name="Remington K.A."/>
            <person name="Clark A.G."/>
            <person name="Waterman M.S."/>
            <person name="Eichler E.E."/>
            <person name="Adams M.D."/>
            <person name="Hunkapiller M.W."/>
            <person name="Myers E.W."/>
            <person name="Venter J.C."/>
        </authorList>
    </citation>
    <scope>NUCLEOTIDE SEQUENCE [LARGE SCALE GENOMIC DNA]</scope>
</reference>
<reference key="5">
    <citation type="journal article" date="2004" name="Genome Res.">
        <title>The status, quality, and expansion of the NIH full-length cDNA project: the Mammalian Gene Collection (MGC).</title>
        <authorList>
            <consortium name="The MGC Project Team"/>
        </authorList>
    </citation>
    <scope>NUCLEOTIDE SEQUENCE [LARGE SCALE MRNA] (ISOFORM 2)</scope>
    <source>
        <tissue>Kidney</tissue>
    </source>
</reference>
<reference key="6">
    <citation type="journal article" date="2009" name="Science">
        <title>Lysine acetylation targets protein complexes and co-regulates major cellular functions.</title>
        <authorList>
            <person name="Choudhary C."/>
            <person name="Kumar C."/>
            <person name="Gnad F."/>
            <person name="Nielsen M.L."/>
            <person name="Rehman M."/>
            <person name="Walther T.C."/>
            <person name="Olsen J.V."/>
            <person name="Mann M."/>
        </authorList>
    </citation>
    <scope>ACETYLATION [LARGE SCALE ANALYSIS] AT LYS-41</scope>
    <scope>IDENTIFICATION BY MASS SPECTROMETRY [LARGE SCALE ANALYSIS]</scope>
</reference>
<reference key="7">
    <citation type="journal article" date="2011" name="BMC Syst. Biol.">
        <title>Initial characterization of the human central proteome.</title>
        <authorList>
            <person name="Burkard T.R."/>
            <person name="Planyavsky M."/>
            <person name="Kaupe I."/>
            <person name="Breitwieser F.P."/>
            <person name="Buerckstuemmer T."/>
            <person name="Bennett K.L."/>
            <person name="Superti-Furga G."/>
            <person name="Colinge J."/>
        </authorList>
    </citation>
    <scope>IDENTIFICATION BY MASS SPECTROMETRY [LARGE SCALE ANALYSIS]</scope>
</reference>
<reference key="8">
    <citation type="journal article" date="2014" name="J. Proteomics">
        <title>An enzyme assisted RP-RPLC approach for in-depth analysis of human liver phosphoproteome.</title>
        <authorList>
            <person name="Bian Y."/>
            <person name="Song C."/>
            <person name="Cheng K."/>
            <person name="Dong M."/>
            <person name="Wang F."/>
            <person name="Huang J."/>
            <person name="Sun D."/>
            <person name="Wang L."/>
            <person name="Ye M."/>
            <person name="Zou H."/>
        </authorList>
    </citation>
    <scope>IDENTIFICATION BY MASS SPECTROMETRY [LARGE SCALE ANALYSIS]</scope>
    <source>
        <tissue>Liver</tissue>
    </source>
</reference>
<reference key="9">
    <citation type="journal article" date="2018" name="Sci. Rep.">
        <title>A double helical motif in OCIAD2 is essential for its localization, interactions and STAT3 activation.</title>
        <authorList>
            <person name="Sinha S."/>
            <person name="Bheemsetty V.A."/>
            <person name="Inamdar M.S."/>
        </authorList>
    </citation>
    <scope>FUNCTION</scope>
    <scope>SUBCELLULAR LOCATION</scope>
    <scope>INTERACTION WITH OCIAD1 AND STAT3</scope>
</reference>
<reference key="10">
    <citation type="journal article" date="2022" name="Mol. Biol. Cell">
        <title>Ovarian carcinoma immunoreactive antigen-like protein 2 (OCIAD2) is a novel complex III-specific assembly factor in mitochondria.</title>
        <authorList>
            <person name="Chojnacka K.J."/>
            <person name="Elancheliyan P."/>
            <person name="Mussulini B.H.M."/>
            <person name="Mohanraj K."/>
            <person name="Callegari S."/>
            <person name="Gosk A."/>
            <person name="Banach T."/>
            <person name="Goral T."/>
            <person name="Szczepanowska K."/>
            <person name="Rehling P."/>
            <person name="Serwa R.A."/>
            <person name="Chacinska A."/>
        </authorList>
    </citation>
    <scope>FUNCTION</scope>
    <scope>SUBCELLULAR LOCATION</scope>
</reference>
<organism>
    <name type="scientific">Homo sapiens</name>
    <name type="common">Human</name>
    <dbReference type="NCBI Taxonomy" id="9606"/>
    <lineage>
        <taxon>Eukaryota</taxon>
        <taxon>Metazoa</taxon>
        <taxon>Chordata</taxon>
        <taxon>Craniata</taxon>
        <taxon>Vertebrata</taxon>
        <taxon>Euteleostomi</taxon>
        <taxon>Mammalia</taxon>
        <taxon>Eutheria</taxon>
        <taxon>Euarchontoglires</taxon>
        <taxon>Primates</taxon>
        <taxon>Haplorrhini</taxon>
        <taxon>Catarrhini</taxon>
        <taxon>Hominidae</taxon>
        <taxon>Homo</taxon>
    </lineage>
</organism>
<proteinExistence type="evidence at protein level"/>
<evidence type="ECO:0000256" key="1">
    <source>
        <dbReference type="SAM" id="MobiDB-lite"/>
    </source>
</evidence>
<evidence type="ECO:0000269" key="2">
    <source>
    </source>
</evidence>
<evidence type="ECO:0000269" key="3">
    <source>
    </source>
</evidence>
<evidence type="ECO:0000303" key="4">
    <source>
    </source>
</evidence>
<evidence type="ECO:0000303" key="5">
    <source>
    </source>
</evidence>
<evidence type="ECO:0007744" key="6">
    <source>
    </source>
</evidence>
<comment type="function">
    <text evidence="2 3">Has an essential role in the assembly of mitochondrial respiratory chain complex III (PubMed:35080992). Is also required for STAT3 activation and plays a role in cell migration (PubMed:29743632).</text>
</comment>
<comment type="subunit">
    <text evidence="2">Interacts (via OCIA domain) with OCIAD1/ASRIJ and STAT3.</text>
</comment>
<comment type="subcellular location">
    <subcellularLocation>
        <location evidence="2">Endosome</location>
    </subcellularLocation>
    <subcellularLocation>
        <location evidence="2">Mitochondrion</location>
    </subcellularLocation>
    <subcellularLocation>
        <location evidence="3">Mitochondrion inner membrane</location>
    </subcellularLocation>
</comment>
<comment type="alternative products">
    <event type="alternative splicing"/>
    <isoform>
        <id>Q56VL3-1</id>
        <name>1</name>
        <sequence type="displayed"/>
    </isoform>
    <isoform>
        <id>Q56VL3-2</id>
        <name>2</name>
        <sequence type="described" ref="VSP_027626"/>
    </isoform>
</comment>
<protein>
    <recommendedName>
        <fullName>OCIA domain-containing protein 2</fullName>
    </recommendedName>
    <alternativeName>
        <fullName>Ovarian carcinoma immunoreactive antigen-like protein</fullName>
    </alternativeName>
</protein>
<gene>
    <name type="primary">OCIAD2</name>
</gene>
<dbReference type="EMBL" id="AY472117">
    <property type="protein sequence ID" value="AAS47684.1"/>
    <property type="molecule type" value="mRNA"/>
</dbReference>
<dbReference type="EMBL" id="AK298305">
    <property type="protein sequence ID" value="BAG60559.1"/>
    <property type="molecule type" value="mRNA"/>
</dbReference>
<dbReference type="EMBL" id="CR749310">
    <property type="protein sequence ID" value="CAH18165.1"/>
    <property type="molecule type" value="mRNA"/>
</dbReference>
<dbReference type="EMBL" id="CH471069">
    <property type="protein sequence ID" value="EAW93077.1"/>
    <property type="molecule type" value="Genomic_DNA"/>
</dbReference>
<dbReference type="EMBL" id="CH471069">
    <property type="protein sequence ID" value="EAW93075.1"/>
    <property type="molecule type" value="Genomic_DNA"/>
</dbReference>
<dbReference type="EMBL" id="BC032808">
    <property type="protein sequence ID" value="AAH32808.1"/>
    <property type="molecule type" value="mRNA"/>
</dbReference>
<dbReference type="CCDS" id="CCDS33981.1">
    <molecule id="Q56VL3-1"/>
</dbReference>
<dbReference type="CCDS" id="CCDS3485.1">
    <molecule id="Q56VL3-2"/>
</dbReference>
<dbReference type="RefSeq" id="NP_001014446.1">
    <molecule id="Q56VL3-1"/>
    <property type="nucleotide sequence ID" value="NM_001014446.3"/>
</dbReference>
<dbReference type="RefSeq" id="NP_001273702.1">
    <molecule id="Q56VL3-2"/>
    <property type="nucleotide sequence ID" value="NM_001286773.2"/>
</dbReference>
<dbReference type="RefSeq" id="NP_689611.1">
    <molecule id="Q56VL3-2"/>
    <property type="nucleotide sequence ID" value="NM_152398.4"/>
</dbReference>
<dbReference type="BioGRID" id="126317">
    <property type="interactions" value="76"/>
</dbReference>
<dbReference type="FunCoup" id="Q56VL3">
    <property type="interactions" value="544"/>
</dbReference>
<dbReference type="IntAct" id="Q56VL3">
    <property type="interactions" value="29"/>
</dbReference>
<dbReference type="MINT" id="Q56VL3"/>
<dbReference type="STRING" id="9606.ENSP00000423014"/>
<dbReference type="iPTMnet" id="Q56VL3"/>
<dbReference type="PhosphoSitePlus" id="Q56VL3"/>
<dbReference type="SwissPalm" id="Q56VL3"/>
<dbReference type="BioMuta" id="OCIAD2"/>
<dbReference type="DMDM" id="74741044"/>
<dbReference type="jPOST" id="Q56VL3"/>
<dbReference type="MassIVE" id="Q56VL3"/>
<dbReference type="PaxDb" id="9606-ENSP00000423014"/>
<dbReference type="PeptideAtlas" id="Q56VL3"/>
<dbReference type="ProteomicsDB" id="62591">
    <molecule id="Q56VL3-1"/>
</dbReference>
<dbReference type="ProteomicsDB" id="62592">
    <molecule id="Q56VL3-2"/>
</dbReference>
<dbReference type="Pumba" id="Q56VL3"/>
<dbReference type="Antibodypedia" id="23867">
    <property type="antibodies" value="163 antibodies from 27 providers"/>
</dbReference>
<dbReference type="DNASU" id="132299"/>
<dbReference type="Ensembl" id="ENST00000273860.8">
    <molecule id="Q56VL3-2"/>
    <property type="protein sequence ID" value="ENSP00000273860.4"/>
    <property type="gene ID" value="ENSG00000145247.12"/>
</dbReference>
<dbReference type="Ensembl" id="ENST00000508632.6">
    <molecule id="Q56VL3-1"/>
    <property type="protein sequence ID" value="ENSP00000423014.1"/>
    <property type="gene ID" value="ENSG00000145247.12"/>
</dbReference>
<dbReference type="Ensembl" id="ENST00000620187.4">
    <molecule id="Q56VL3-2"/>
    <property type="protein sequence ID" value="ENSP00000483997.1"/>
    <property type="gene ID" value="ENSG00000145247.12"/>
</dbReference>
<dbReference type="GeneID" id="132299"/>
<dbReference type="KEGG" id="hsa:132299"/>
<dbReference type="MANE-Select" id="ENST00000508632.6">
    <property type="protein sequence ID" value="ENSP00000423014.1"/>
    <property type="RefSeq nucleotide sequence ID" value="NM_001014446.3"/>
    <property type="RefSeq protein sequence ID" value="NP_001014446.1"/>
</dbReference>
<dbReference type="UCSC" id="uc003gyt.5">
    <molecule id="Q56VL3-1"/>
    <property type="organism name" value="human"/>
</dbReference>
<dbReference type="AGR" id="HGNC:28685"/>
<dbReference type="CTD" id="132299"/>
<dbReference type="DisGeNET" id="132299"/>
<dbReference type="GeneCards" id="OCIAD2"/>
<dbReference type="HGNC" id="HGNC:28685">
    <property type="gene designation" value="OCIAD2"/>
</dbReference>
<dbReference type="HPA" id="ENSG00000145247">
    <property type="expression patterns" value="Tissue enhanced (kidney)"/>
</dbReference>
<dbReference type="MIM" id="619633">
    <property type="type" value="gene"/>
</dbReference>
<dbReference type="neXtProt" id="NX_Q56VL3"/>
<dbReference type="OpenTargets" id="ENSG00000145247"/>
<dbReference type="PharmGKB" id="PA128394755"/>
<dbReference type="VEuPathDB" id="HostDB:ENSG00000145247"/>
<dbReference type="eggNOG" id="ENOG502S4DE">
    <property type="taxonomic scope" value="Eukaryota"/>
</dbReference>
<dbReference type="GeneTree" id="ENSGT00530000063690"/>
<dbReference type="HOGENOM" id="CLU_109198_0_0_1"/>
<dbReference type="InParanoid" id="Q56VL3"/>
<dbReference type="OMA" id="GIGPWSK"/>
<dbReference type="OrthoDB" id="10003372at2759"/>
<dbReference type="PAN-GO" id="Q56VL3">
    <property type="GO annotations" value="0 GO annotations based on evolutionary models"/>
</dbReference>
<dbReference type="PhylomeDB" id="Q56VL3"/>
<dbReference type="TreeFam" id="TF327106"/>
<dbReference type="PathwayCommons" id="Q56VL3"/>
<dbReference type="SignaLink" id="Q56VL3"/>
<dbReference type="BioGRID-ORCS" id="132299">
    <property type="hits" value="9 hits in 1128 CRISPR screens"/>
</dbReference>
<dbReference type="ChiTaRS" id="OCIAD2">
    <property type="organism name" value="human"/>
</dbReference>
<dbReference type="GenomeRNAi" id="132299"/>
<dbReference type="Pharos" id="Q56VL3">
    <property type="development level" value="Tbio"/>
</dbReference>
<dbReference type="PRO" id="PR:Q56VL3"/>
<dbReference type="Proteomes" id="UP000005640">
    <property type="component" value="Chromosome 4"/>
</dbReference>
<dbReference type="RNAct" id="Q56VL3">
    <property type="molecule type" value="protein"/>
</dbReference>
<dbReference type="Bgee" id="ENSG00000145247">
    <property type="expression patterns" value="Expressed in kidney epithelium and 179 other cell types or tissues"/>
</dbReference>
<dbReference type="ExpressionAtlas" id="Q56VL3">
    <property type="expression patterns" value="baseline and differential"/>
</dbReference>
<dbReference type="GO" id="GO:0005768">
    <property type="term" value="C:endosome"/>
    <property type="evidence" value="ECO:0000250"/>
    <property type="project" value="FlyBase"/>
</dbReference>
<dbReference type="GO" id="GO:0005794">
    <property type="term" value="C:Golgi apparatus"/>
    <property type="evidence" value="ECO:0000250"/>
    <property type="project" value="FlyBase"/>
</dbReference>
<dbReference type="GO" id="GO:0005764">
    <property type="term" value="C:lysosome"/>
    <property type="evidence" value="ECO:0000250"/>
    <property type="project" value="FlyBase"/>
</dbReference>
<dbReference type="GO" id="GO:0005739">
    <property type="term" value="C:mitochondrion"/>
    <property type="evidence" value="ECO:0006056"/>
    <property type="project" value="FlyBase"/>
</dbReference>
<dbReference type="GO" id="GO:0006897">
    <property type="term" value="P:endocytosis"/>
    <property type="evidence" value="ECO:0000250"/>
    <property type="project" value="FlyBase"/>
</dbReference>
<dbReference type="GO" id="GO:0061484">
    <property type="term" value="P:hematopoietic stem cell homeostasis"/>
    <property type="evidence" value="ECO:0000250"/>
    <property type="project" value="FlyBase"/>
</dbReference>
<dbReference type="GO" id="GO:0046427">
    <property type="term" value="P:positive regulation of receptor signaling pathway via JAK-STAT"/>
    <property type="evidence" value="ECO:0000250"/>
    <property type="project" value="FlyBase"/>
</dbReference>
<dbReference type="GO" id="GO:0009617">
    <property type="term" value="P:response to bacterium"/>
    <property type="evidence" value="ECO:0007669"/>
    <property type="project" value="Ensembl"/>
</dbReference>
<dbReference type="InterPro" id="IPR040187">
    <property type="entry name" value="OCAD1/2"/>
</dbReference>
<dbReference type="InterPro" id="IPR009764">
    <property type="entry name" value="OCIA_dom"/>
</dbReference>
<dbReference type="PANTHER" id="PTHR13336:SF2">
    <property type="entry name" value="OCIA DOMAIN-CONTAINING PROTEIN 2"/>
    <property type="match status" value="1"/>
</dbReference>
<dbReference type="PANTHER" id="PTHR13336">
    <property type="entry name" value="OVARIAN CARCINOMA IMMUNOREACTIVE ANTIGEN"/>
    <property type="match status" value="1"/>
</dbReference>
<dbReference type="Pfam" id="PF07051">
    <property type="entry name" value="OCIA"/>
    <property type="match status" value="1"/>
</dbReference>